<gene>
    <name type="primary">cysS</name>
    <name type="ordered locus">APE_1592.1</name>
</gene>
<organism>
    <name type="scientific">Aeropyrum pernix (strain ATCC 700893 / DSM 11879 / JCM 9820 / NBRC 100138 / K1)</name>
    <dbReference type="NCBI Taxonomy" id="272557"/>
    <lineage>
        <taxon>Archaea</taxon>
        <taxon>Thermoproteota</taxon>
        <taxon>Thermoprotei</taxon>
        <taxon>Desulfurococcales</taxon>
        <taxon>Desulfurococcaceae</taxon>
        <taxon>Aeropyrum</taxon>
    </lineage>
</organism>
<reference key="1">
    <citation type="journal article" date="1999" name="DNA Res.">
        <title>Complete genome sequence of an aerobic hyper-thermophilic crenarchaeon, Aeropyrum pernix K1.</title>
        <authorList>
            <person name="Kawarabayasi Y."/>
            <person name="Hino Y."/>
            <person name="Horikawa H."/>
            <person name="Yamazaki S."/>
            <person name="Haikawa Y."/>
            <person name="Jin-no K."/>
            <person name="Takahashi M."/>
            <person name="Sekine M."/>
            <person name="Baba S."/>
            <person name="Ankai A."/>
            <person name="Kosugi H."/>
            <person name="Hosoyama A."/>
            <person name="Fukui S."/>
            <person name="Nagai Y."/>
            <person name="Nishijima K."/>
            <person name="Nakazawa H."/>
            <person name="Takamiya M."/>
            <person name="Masuda S."/>
            <person name="Funahashi T."/>
            <person name="Tanaka T."/>
            <person name="Kudoh Y."/>
            <person name="Yamazaki J."/>
            <person name="Kushida N."/>
            <person name="Oguchi A."/>
            <person name="Aoki K."/>
            <person name="Kubota K."/>
            <person name="Nakamura Y."/>
            <person name="Nomura N."/>
            <person name="Sako Y."/>
            <person name="Kikuchi H."/>
        </authorList>
    </citation>
    <scope>NUCLEOTIDE SEQUENCE [LARGE SCALE GENOMIC DNA]</scope>
    <source>
        <strain>ATCC 700893 / DSM 11879 / JCM 9820 / NBRC 100138 / K1</strain>
    </source>
</reference>
<dbReference type="EC" id="6.1.1.16"/>
<dbReference type="EMBL" id="BA000002">
    <property type="protein sequence ID" value="BAA80592.2"/>
    <property type="molecule type" value="Genomic_DNA"/>
</dbReference>
<dbReference type="PIR" id="C72538">
    <property type="entry name" value="C72538"/>
</dbReference>
<dbReference type="RefSeq" id="WP_010866474.1">
    <property type="nucleotide sequence ID" value="NC_000854.2"/>
</dbReference>
<dbReference type="SMR" id="Q9YBK6"/>
<dbReference type="STRING" id="272557.APE_1592.1"/>
<dbReference type="EnsemblBacteria" id="BAA80592">
    <property type="protein sequence ID" value="BAA80592"/>
    <property type="gene ID" value="APE_1592.1"/>
</dbReference>
<dbReference type="GeneID" id="1446118"/>
<dbReference type="KEGG" id="ape:APE_1592.1"/>
<dbReference type="PATRIC" id="fig|272557.25.peg.1077"/>
<dbReference type="eggNOG" id="arCOG00486">
    <property type="taxonomic scope" value="Archaea"/>
</dbReference>
<dbReference type="Proteomes" id="UP000002518">
    <property type="component" value="Chromosome"/>
</dbReference>
<dbReference type="GO" id="GO:0005737">
    <property type="term" value="C:cytoplasm"/>
    <property type="evidence" value="ECO:0007669"/>
    <property type="project" value="UniProtKB-SubCell"/>
</dbReference>
<dbReference type="GO" id="GO:0005524">
    <property type="term" value="F:ATP binding"/>
    <property type="evidence" value="ECO:0007669"/>
    <property type="project" value="UniProtKB-UniRule"/>
</dbReference>
<dbReference type="GO" id="GO:0004817">
    <property type="term" value="F:cysteine-tRNA ligase activity"/>
    <property type="evidence" value="ECO:0007669"/>
    <property type="project" value="UniProtKB-UniRule"/>
</dbReference>
<dbReference type="GO" id="GO:0008270">
    <property type="term" value="F:zinc ion binding"/>
    <property type="evidence" value="ECO:0007669"/>
    <property type="project" value="UniProtKB-UniRule"/>
</dbReference>
<dbReference type="GO" id="GO:0006423">
    <property type="term" value="P:cysteinyl-tRNA aminoacylation"/>
    <property type="evidence" value="ECO:0007669"/>
    <property type="project" value="UniProtKB-UniRule"/>
</dbReference>
<dbReference type="CDD" id="cd00672">
    <property type="entry name" value="CysRS_core"/>
    <property type="match status" value="1"/>
</dbReference>
<dbReference type="FunFam" id="3.40.50.620:FF:000068">
    <property type="entry name" value="Cysteine--tRNA ligase"/>
    <property type="match status" value="1"/>
</dbReference>
<dbReference type="Gene3D" id="1.20.120.1910">
    <property type="entry name" value="Cysteine-tRNA ligase, C-terminal anti-codon recognition domain"/>
    <property type="match status" value="1"/>
</dbReference>
<dbReference type="Gene3D" id="3.40.50.620">
    <property type="entry name" value="HUPs"/>
    <property type="match status" value="1"/>
</dbReference>
<dbReference type="HAMAP" id="MF_00041">
    <property type="entry name" value="Cys_tRNA_synth"/>
    <property type="match status" value="1"/>
</dbReference>
<dbReference type="InterPro" id="IPR015803">
    <property type="entry name" value="Cys-tRNA-ligase"/>
</dbReference>
<dbReference type="InterPro" id="IPR024909">
    <property type="entry name" value="Cys-tRNA/MSH_ligase"/>
</dbReference>
<dbReference type="InterPro" id="IPR056411">
    <property type="entry name" value="CysS_C"/>
</dbReference>
<dbReference type="InterPro" id="IPR014729">
    <property type="entry name" value="Rossmann-like_a/b/a_fold"/>
</dbReference>
<dbReference type="InterPro" id="IPR032678">
    <property type="entry name" value="tRNA-synt_1_cat_dom"/>
</dbReference>
<dbReference type="InterPro" id="IPR009080">
    <property type="entry name" value="tRNAsynth_Ia_anticodon-bd"/>
</dbReference>
<dbReference type="NCBIfam" id="TIGR00435">
    <property type="entry name" value="cysS"/>
    <property type="match status" value="1"/>
</dbReference>
<dbReference type="PANTHER" id="PTHR10890:SF3">
    <property type="entry name" value="CYSTEINE--TRNA LIGASE, CYTOPLASMIC"/>
    <property type="match status" value="1"/>
</dbReference>
<dbReference type="PANTHER" id="PTHR10890">
    <property type="entry name" value="CYSTEINYL-TRNA SYNTHETASE"/>
    <property type="match status" value="1"/>
</dbReference>
<dbReference type="Pfam" id="PF23493">
    <property type="entry name" value="CysS_C"/>
    <property type="match status" value="1"/>
</dbReference>
<dbReference type="Pfam" id="PF01406">
    <property type="entry name" value="tRNA-synt_1e"/>
    <property type="match status" value="1"/>
</dbReference>
<dbReference type="PRINTS" id="PR00983">
    <property type="entry name" value="TRNASYNTHCYS"/>
</dbReference>
<dbReference type="SUPFAM" id="SSF47323">
    <property type="entry name" value="Anticodon-binding domain of a subclass of class I aminoacyl-tRNA synthetases"/>
    <property type="match status" value="1"/>
</dbReference>
<dbReference type="SUPFAM" id="SSF52374">
    <property type="entry name" value="Nucleotidylyl transferase"/>
    <property type="match status" value="1"/>
</dbReference>
<feature type="chain" id="PRO_0000159532" description="Cysteine--tRNA ligase">
    <location>
        <begin position="1"/>
        <end position="472"/>
    </location>
</feature>
<feature type="short sequence motif" description="'HIGH' region">
    <location>
        <begin position="30"/>
        <end position="40"/>
    </location>
</feature>
<feature type="short sequence motif" description="'KMSKS' region">
    <location>
        <begin position="264"/>
        <end position="268"/>
    </location>
</feature>
<feature type="binding site" evidence="1">
    <location>
        <position position="28"/>
    </location>
    <ligand>
        <name>Zn(2+)</name>
        <dbReference type="ChEBI" id="CHEBI:29105"/>
    </ligand>
</feature>
<feature type="binding site" evidence="1">
    <location>
        <position position="207"/>
    </location>
    <ligand>
        <name>Zn(2+)</name>
        <dbReference type="ChEBI" id="CHEBI:29105"/>
    </ligand>
</feature>
<feature type="binding site" evidence="1">
    <location>
        <position position="232"/>
    </location>
    <ligand>
        <name>Zn(2+)</name>
        <dbReference type="ChEBI" id="CHEBI:29105"/>
    </ligand>
</feature>
<feature type="binding site" evidence="1">
    <location>
        <position position="236"/>
    </location>
    <ligand>
        <name>Zn(2+)</name>
        <dbReference type="ChEBI" id="CHEBI:29105"/>
    </ligand>
</feature>
<feature type="binding site" evidence="1">
    <location>
        <position position="267"/>
    </location>
    <ligand>
        <name>ATP</name>
        <dbReference type="ChEBI" id="CHEBI:30616"/>
    </ligand>
</feature>
<proteinExistence type="inferred from homology"/>
<comment type="catalytic activity">
    <reaction>
        <text>tRNA(Cys) + L-cysteine + ATP = L-cysteinyl-tRNA(Cys) + AMP + diphosphate</text>
        <dbReference type="Rhea" id="RHEA:17773"/>
        <dbReference type="Rhea" id="RHEA-COMP:9661"/>
        <dbReference type="Rhea" id="RHEA-COMP:9679"/>
        <dbReference type="ChEBI" id="CHEBI:30616"/>
        <dbReference type="ChEBI" id="CHEBI:33019"/>
        <dbReference type="ChEBI" id="CHEBI:35235"/>
        <dbReference type="ChEBI" id="CHEBI:78442"/>
        <dbReference type="ChEBI" id="CHEBI:78517"/>
        <dbReference type="ChEBI" id="CHEBI:456215"/>
        <dbReference type="EC" id="6.1.1.16"/>
    </reaction>
</comment>
<comment type="cofactor">
    <cofactor evidence="1">
        <name>Zn(2+)</name>
        <dbReference type="ChEBI" id="CHEBI:29105"/>
    </cofactor>
    <text evidence="1">Binds 1 zinc ion per subunit.</text>
</comment>
<comment type="subcellular location">
    <subcellularLocation>
        <location evidence="1">Cytoplasm</location>
    </subcellularLocation>
</comment>
<comment type="similarity">
    <text evidence="2">Belongs to the class-I aminoacyl-tRNA synthetase family.</text>
</comment>
<keyword id="KW-0030">Aminoacyl-tRNA synthetase</keyword>
<keyword id="KW-0067">ATP-binding</keyword>
<keyword id="KW-0963">Cytoplasm</keyword>
<keyword id="KW-0436">Ligase</keyword>
<keyword id="KW-0479">Metal-binding</keyword>
<keyword id="KW-0547">Nucleotide-binding</keyword>
<keyword id="KW-0648">Protein biosynthesis</keyword>
<keyword id="KW-1185">Reference proteome</keyword>
<keyword id="KW-0862">Zinc</keyword>
<protein>
    <recommendedName>
        <fullName>Cysteine--tRNA ligase</fullName>
        <ecNumber>6.1.1.16</ecNumber>
    </recommendedName>
    <alternativeName>
        <fullName>Cysteinyl-tRNA synthetase</fullName>
        <shortName>CysRS</shortName>
    </alternativeName>
</protein>
<accession>Q9YBK6</accession>
<evidence type="ECO:0000250" key="1"/>
<evidence type="ECO:0000305" key="2"/>
<sequence>MIRVFNTLGRRKEVFNPYSPPLVGMYVCGPTVYDYTHIGHARTFTVFDAIKRYLRLRGYDVFHVQNITDIDDKIINRAREEGRDWREIVREYSRDYLEGLGSLGIQIDHHPRVTDHISDIIRFIEGLIEKGYAYVAESGSVYFEVDKYPGYGMLSGHLSKEAWRQEEDVLHEKKSPYDFALWKAAKPGEPSWESPWGRGRPGWHIECSVMSSRYLGSRIDIHGGGVDLVFPHHENERAQSESYFGHRWVRYWLHASYLTIKGEKMSKSLGNIIPLREALREWGPGPLRLWLLSSHYRSNLDYSEEALGQYRRLYERLRQAADSIGRRLERAEPKGRLGEGELETVERLKGVVRRWHEAMSDDFNMGKAMSSLWEFTTIYFREVEQTESYTLLWLSWRILTGFNSVYAFAPDIVEARRPERSLEDSLVQALVDVRSELRRRKMYDLADEIRSRLAQLGFVLHDKGEKTEWRRR</sequence>
<name>SYC_AERPE</name>